<keyword id="KW-0002">3D-structure</keyword>
<keyword id="KW-0903">Direct protein sequencing</keyword>
<keyword id="KW-0505">Motor protein</keyword>
<keyword id="KW-0514">Muscle protein</keyword>
<keyword id="KW-0518">Myosin</keyword>
<keyword id="KW-0677">Repeat</keyword>
<comment type="function">
    <text>In molluscan muscle, calcium regulation is associated with myosin rather than with actin. Muscle myosin contains two types of light chains: the catalytic light chain, essential for ATPase activity, and the regulatory light chain, a calcium-binding protein responsible for Ca(2+) dependent binding and Ca(2+) dependent Mg-ATPase activity.</text>
</comment>
<organism>
    <name type="scientific">Argopecten irradians</name>
    <name type="common">Bay scallop</name>
    <name type="synonym">Aequipecten irradians</name>
    <dbReference type="NCBI Taxonomy" id="31199"/>
    <lineage>
        <taxon>Eukaryota</taxon>
        <taxon>Metazoa</taxon>
        <taxon>Spiralia</taxon>
        <taxon>Lophotrochozoa</taxon>
        <taxon>Mollusca</taxon>
        <taxon>Bivalvia</taxon>
        <taxon>Autobranchia</taxon>
        <taxon>Pteriomorphia</taxon>
        <taxon>Pectinida</taxon>
        <taxon>Pectinoidea</taxon>
        <taxon>Pectinidae</taxon>
        <taxon>Argopecten</taxon>
    </lineage>
</organism>
<proteinExistence type="evidence at protein level"/>
<protein>
    <recommendedName>
        <fullName>Myosin essential light chain, striated adductor muscle</fullName>
        <shortName>E-LC</shortName>
    </recommendedName>
    <alternativeName>
        <fullName>Sulfhydryl light chain</fullName>
        <shortName>SHLC</shortName>
    </alternativeName>
</protein>
<accession>P07291</accession>
<evidence type="ECO:0000255" key="1">
    <source>
        <dbReference type="PROSITE-ProRule" id="PRU00448"/>
    </source>
</evidence>
<evidence type="ECO:0000269" key="2">
    <source>
    </source>
</evidence>
<evidence type="ECO:0007829" key="3">
    <source>
        <dbReference type="PDB" id="1QVI"/>
    </source>
</evidence>
<evidence type="ECO:0007829" key="4">
    <source>
        <dbReference type="PDB" id="1WDC"/>
    </source>
</evidence>
<evidence type="ECO:0007829" key="5">
    <source>
        <dbReference type="PDB" id="3JVT"/>
    </source>
</evidence>
<name>MLE_ARGIR</name>
<sequence length="157" mass="17748">MPKLSQDEIDDLKDVFELFDFWDGRDGAVDAFKLGDVCRCLGINPRNEDVFAVGGTHKMGEKSLPFEEFLPAYEGLMDCEQGTFADYMEAFKTFDREGQGFISGAELRHVLTALGERLSDEDVDEIIKLTDLQEDLEGNVKYEDFVKKVMAGPYPDK</sequence>
<reference key="1">
    <citation type="journal article" date="1987" name="J. Biol. Chem.">
        <title>Cloning and characterization of the scallop essential and regulatory myosin light chain cDNAs.</title>
        <authorList>
            <person name="Goodwin E.B."/>
            <person name="Szent-Gyorgyi A.G."/>
            <person name="Leinwand L.A."/>
        </authorList>
    </citation>
    <scope>NUCLEOTIDE SEQUENCE [MRNA]</scope>
</reference>
<reference key="2">
    <citation type="journal article" date="1986" name="Biochemistry">
        <title>Amino acid sequence of myosin essential light chain from the scallop Aquipecten irradians.</title>
        <authorList>
            <person name="Collins J.H."/>
            <person name="Jakes R."/>
            <person name="Kendrick-Jones J."/>
            <person name="Leszyk J."/>
            <person name="Barouch W."/>
            <person name="Theibert J.L."/>
            <person name="Spiegel J."/>
            <person name="Szent-Gyorgyi A.G."/>
        </authorList>
    </citation>
    <scope>PROTEIN SEQUENCE OF 2-157</scope>
</reference>
<reference key="3">
    <citation type="journal article" date="1994" name="Nature">
        <title>Structure of the regulatory domain of scallop myosin at 2.8-A resolution.</title>
        <authorList>
            <person name="Xie X."/>
            <person name="Harrison D.H."/>
            <person name="Schlichting I."/>
            <person name="Sweet R.M."/>
            <person name="Kalabokis V.N."/>
            <person name="Szent-Gyorgyi A.G."/>
            <person name="Cohen C."/>
        </authorList>
    </citation>
    <scope>X-RAY CRYSTALLOGRAPHY (2.8 ANGSTROMS)</scope>
</reference>
<reference key="4">
    <citation type="journal article" date="1996" name="Structure">
        <title>Structure of the regulatory domain of scallop myosin at 2-A resolution: implications for regulation.</title>
        <authorList>
            <person name="Houdusse A."/>
            <person name="Cohen C."/>
        </authorList>
    </citation>
    <scope>X-RAY CRYSTALLOGRAPHY (2.0 ANGSTROMS)</scope>
</reference>
<dbReference type="EMBL" id="M17201">
    <property type="protein sequence ID" value="AAA27714.1"/>
    <property type="molecule type" value="mRNA"/>
</dbReference>
<dbReference type="PIR" id="A25183">
    <property type="entry name" value="A25183"/>
</dbReference>
<dbReference type="RefSeq" id="XP_069103964.1">
    <property type="nucleotide sequence ID" value="XM_069247863.1"/>
</dbReference>
<dbReference type="PDB" id="1B7T">
    <property type="method" value="X-ray"/>
    <property type="resolution" value="2.50 A"/>
    <property type="chains" value="Z=2-157"/>
</dbReference>
<dbReference type="PDB" id="1DFK">
    <property type="method" value="X-ray"/>
    <property type="resolution" value="4.20 A"/>
    <property type="chains" value="Z=4-155"/>
</dbReference>
<dbReference type="PDB" id="1DFL">
    <property type="method" value="X-ray"/>
    <property type="resolution" value="4.20 A"/>
    <property type="chains" value="X/Z=4-155"/>
</dbReference>
<dbReference type="PDB" id="1KK7">
    <property type="method" value="X-ray"/>
    <property type="resolution" value="3.20 A"/>
    <property type="chains" value="Z=2-157"/>
</dbReference>
<dbReference type="PDB" id="1KK8">
    <property type="method" value="X-ray"/>
    <property type="resolution" value="2.30 A"/>
    <property type="chains" value="C=2-155"/>
</dbReference>
<dbReference type="PDB" id="1KQM">
    <property type="method" value="X-ray"/>
    <property type="resolution" value="3.00 A"/>
    <property type="chains" value="C=2-157"/>
</dbReference>
<dbReference type="PDB" id="1KWO">
    <property type="method" value="X-ray"/>
    <property type="resolution" value="3.80 A"/>
    <property type="chains" value="C=2-157"/>
</dbReference>
<dbReference type="PDB" id="1L2O">
    <property type="method" value="X-ray"/>
    <property type="resolution" value="2.80 A"/>
    <property type="chains" value="C=2-157"/>
</dbReference>
<dbReference type="PDB" id="1QVI">
    <property type="method" value="X-ray"/>
    <property type="resolution" value="2.54 A"/>
    <property type="chains" value="Z=2-157"/>
</dbReference>
<dbReference type="PDB" id="1S5G">
    <property type="method" value="X-ray"/>
    <property type="resolution" value="3.10 A"/>
    <property type="chains" value="Z=2-157"/>
</dbReference>
<dbReference type="PDB" id="1SCM">
    <property type="method" value="X-ray"/>
    <property type="resolution" value="2.80 A"/>
    <property type="chains" value="C=5-153"/>
</dbReference>
<dbReference type="PDB" id="1SR6">
    <property type="method" value="X-ray"/>
    <property type="resolution" value="2.75 A"/>
    <property type="chains" value="C=2-157"/>
</dbReference>
<dbReference type="PDB" id="1WDC">
    <property type="method" value="X-ray"/>
    <property type="resolution" value="2.00 A"/>
    <property type="chains" value="C=2-157"/>
</dbReference>
<dbReference type="PDB" id="2W4T">
    <property type="method" value="EM"/>
    <property type="resolution" value="35.00 A"/>
    <property type="chains" value="Z=5-155"/>
</dbReference>
<dbReference type="PDB" id="2W4V">
    <property type="method" value="EM"/>
    <property type="resolution" value="35.00 A"/>
    <property type="chains" value="Z=5-155"/>
</dbReference>
<dbReference type="PDB" id="2W4W">
    <property type="method" value="EM"/>
    <property type="resolution" value="35.00 A"/>
    <property type="chains" value="Z=5-155"/>
</dbReference>
<dbReference type="PDB" id="3JTD">
    <property type="method" value="X-ray"/>
    <property type="resolution" value="2.57 A"/>
    <property type="chains" value="C=2-156"/>
</dbReference>
<dbReference type="PDB" id="3JVT">
    <property type="method" value="X-ray"/>
    <property type="resolution" value="2.10 A"/>
    <property type="chains" value="C=2-157"/>
</dbReference>
<dbReference type="PDBsum" id="1B7T"/>
<dbReference type="PDBsum" id="1DFK"/>
<dbReference type="PDBsum" id="1DFL"/>
<dbReference type="PDBsum" id="1KK7"/>
<dbReference type="PDBsum" id="1KK8"/>
<dbReference type="PDBsum" id="1KQM"/>
<dbReference type="PDBsum" id="1KWO"/>
<dbReference type="PDBsum" id="1L2O"/>
<dbReference type="PDBsum" id="1QVI"/>
<dbReference type="PDBsum" id="1S5G"/>
<dbReference type="PDBsum" id="1SCM"/>
<dbReference type="PDBsum" id="1SR6"/>
<dbReference type="PDBsum" id="1WDC"/>
<dbReference type="PDBsum" id="2W4T"/>
<dbReference type="PDBsum" id="2W4V"/>
<dbReference type="PDBsum" id="2W4W"/>
<dbReference type="PDBsum" id="3JTD"/>
<dbReference type="PDBsum" id="3JVT"/>
<dbReference type="SMR" id="P07291"/>
<dbReference type="GeneID" id="138307226"/>
<dbReference type="EvolutionaryTrace" id="P07291"/>
<dbReference type="GO" id="GO:0005859">
    <property type="term" value="C:muscle myosin complex"/>
    <property type="evidence" value="ECO:0007669"/>
    <property type="project" value="TreeGrafter"/>
</dbReference>
<dbReference type="GO" id="GO:0005509">
    <property type="term" value="F:calcium ion binding"/>
    <property type="evidence" value="ECO:0007669"/>
    <property type="project" value="InterPro"/>
</dbReference>
<dbReference type="CDD" id="cd00051">
    <property type="entry name" value="EFh"/>
    <property type="match status" value="1"/>
</dbReference>
<dbReference type="FunFam" id="1.10.238.10:FF:000003">
    <property type="entry name" value="Calmodulin A"/>
    <property type="match status" value="1"/>
</dbReference>
<dbReference type="Gene3D" id="1.10.238.10">
    <property type="entry name" value="EF-hand"/>
    <property type="match status" value="2"/>
</dbReference>
<dbReference type="InterPro" id="IPR050230">
    <property type="entry name" value="CALM/Myosin/TropC-like"/>
</dbReference>
<dbReference type="InterPro" id="IPR011992">
    <property type="entry name" value="EF-hand-dom_pair"/>
</dbReference>
<dbReference type="InterPro" id="IPR002048">
    <property type="entry name" value="EF_hand_dom"/>
</dbReference>
<dbReference type="PANTHER" id="PTHR23048">
    <property type="entry name" value="MYOSIN LIGHT CHAIN 1, 3"/>
    <property type="match status" value="1"/>
</dbReference>
<dbReference type="PANTHER" id="PTHR23048:SF33">
    <property type="entry name" value="MYOSIN LIGHT CHAIN ALKALI"/>
    <property type="match status" value="1"/>
</dbReference>
<dbReference type="Pfam" id="PF13499">
    <property type="entry name" value="EF-hand_7"/>
    <property type="match status" value="1"/>
</dbReference>
<dbReference type="SMART" id="SM00054">
    <property type="entry name" value="EFh"/>
    <property type="match status" value="1"/>
</dbReference>
<dbReference type="SUPFAM" id="SSF47473">
    <property type="entry name" value="EF-hand"/>
    <property type="match status" value="1"/>
</dbReference>
<dbReference type="PROSITE" id="PS50222">
    <property type="entry name" value="EF_HAND_2"/>
    <property type="match status" value="2"/>
</dbReference>
<feature type="initiator methionine" description="Removed" evidence="2">
    <location>
        <position position="1"/>
    </location>
</feature>
<feature type="chain" id="PRO_0000198718" description="Myosin essential light chain, striated adductor muscle">
    <location>
        <begin position="2"/>
        <end position="157"/>
    </location>
</feature>
<feature type="domain" description="EF-hand 1" evidence="1">
    <location>
        <begin position="7"/>
        <end position="44"/>
    </location>
</feature>
<feature type="domain" description="EF-hand 2" evidence="1">
    <location>
        <begin position="82"/>
        <end position="117"/>
    </location>
</feature>
<feature type="helix" evidence="4">
    <location>
        <begin position="6"/>
        <end position="22"/>
    </location>
</feature>
<feature type="strand" evidence="4">
    <location>
        <begin position="25"/>
        <end position="27"/>
    </location>
</feature>
<feature type="helix" evidence="4">
    <location>
        <begin position="31"/>
        <end position="33"/>
    </location>
</feature>
<feature type="helix" evidence="4">
    <location>
        <begin position="34"/>
        <end position="40"/>
    </location>
</feature>
<feature type="helix" evidence="4">
    <location>
        <begin position="47"/>
        <end position="52"/>
    </location>
</feature>
<feature type="strand" evidence="5">
    <location>
        <begin position="57"/>
        <end position="61"/>
    </location>
</feature>
<feature type="strand" evidence="3">
    <location>
        <begin position="63"/>
        <end position="65"/>
    </location>
</feature>
<feature type="helix" evidence="4">
    <location>
        <begin position="66"/>
        <end position="76"/>
    </location>
</feature>
<feature type="helix" evidence="4">
    <location>
        <begin position="84"/>
        <end position="92"/>
    </location>
</feature>
<feature type="strand" evidence="4">
    <location>
        <begin position="96"/>
        <end position="103"/>
    </location>
</feature>
<feature type="helix" evidence="4">
    <location>
        <begin position="104"/>
        <end position="113"/>
    </location>
</feature>
<feature type="strand" evidence="4">
    <location>
        <begin position="114"/>
        <end position="116"/>
    </location>
</feature>
<feature type="helix" evidence="4">
    <location>
        <begin position="120"/>
        <end position="130"/>
    </location>
</feature>
<feature type="strand" evidence="4">
    <location>
        <begin position="138"/>
        <end position="141"/>
    </location>
</feature>
<feature type="helix" evidence="4">
    <location>
        <begin position="142"/>
        <end position="151"/>
    </location>
</feature>
<feature type="turn" evidence="5">
    <location>
        <begin position="152"/>
        <end position="155"/>
    </location>
</feature>